<keyword id="KW-0963">Cytoplasm</keyword>
<keyword id="KW-0489">Methyltransferase</keyword>
<keyword id="KW-0694">RNA-binding</keyword>
<keyword id="KW-0698">rRNA processing</keyword>
<keyword id="KW-0949">S-adenosyl-L-methionine</keyword>
<keyword id="KW-0808">Transferase</keyword>
<sequence>MTESTFSQYPRLVLSKGREKSLLRRHPWVFSGAVSRLEGKANLGETIDIVDHQGKWLARGAWSPASQIRARVWTFDKAESIDIAFFTRRLRQAQQWRDWLAKKDGLDSYRLIAGESDGLPGVTIDRFGHFLVLQLLSAGAEYQRAALISALQTCYPDCAIYDRSDVAVRKKEGMALTQGPVTGELPPALLPIEEHGMKLLVDIQGGHKTGYYLDQRDSRLATRRYVENQRVLNCFSYTGGFAVSALMGGCRQVVSVDTSQDALDIARQNVELNQLDLSKAEFVRDDVFKLLRAYREHGEKFDVIIMDPPKFVENKSQLMGACRGYKDINMLAIQLLNPGGILLTFSCSGLMTSDLFQKIIADAAIDAGRDVQFIEQFRQAADHPVIATYPEGLYLKGFACRVM</sequence>
<proteinExistence type="inferred from homology"/>
<name>RLMI_SALSV</name>
<comment type="function">
    <text evidence="1">Specifically methylates the cytosine at position 1962 (m5C1962) of 23S rRNA.</text>
</comment>
<comment type="catalytic activity">
    <reaction evidence="1">
        <text>cytidine(1962) in 23S rRNA + S-adenosyl-L-methionine = 5-methylcytidine(1962) in 23S rRNA + S-adenosyl-L-homocysteine + H(+)</text>
        <dbReference type="Rhea" id="RHEA:42912"/>
        <dbReference type="Rhea" id="RHEA-COMP:10382"/>
        <dbReference type="Rhea" id="RHEA-COMP:10386"/>
        <dbReference type="ChEBI" id="CHEBI:15378"/>
        <dbReference type="ChEBI" id="CHEBI:57856"/>
        <dbReference type="ChEBI" id="CHEBI:59789"/>
        <dbReference type="ChEBI" id="CHEBI:74483"/>
        <dbReference type="ChEBI" id="CHEBI:82748"/>
        <dbReference type="EC" id="2.1.1.191"/>
    </reaction>
</comment>
<comment type="subcellular location">
    <subcellularLocation>
        <location evidence="1">Cytoplasm</location>
    </subcellularLocation>
</comment>
<comment type="similarity">
    <text evidence="1">Belongs to the methyltransferase superfamily. RlmI family.</text>
</comment>
<accession>B4TSJ2</accession>
<gene>
    <name evidence="1" type="primary">rlmI</name>
    <name type="ordered locus">SeSA_A1143</name>
</gene>
<feature type="chain" id="PRO_0000366250" description="Ribosomal RNA large subunit methyltransferase I">
    <location>
        <begin position="1"/>
        <end position="403"/>
    </location>
</feature>
<feature type="domain" description="PUA" evidence="1">
    <location>
        <begin position="9"/>
        <end position="88"/>
    </location>
</feature>
<protein>
    <recommendedName>
        <fullName evidence="1">Ribosomal RNA large subunit methyltransferase I</fullName>
        <ecNumber evidence="1">2.1.1.191</ecNumber>
    </recommendedName>
    <alternativeName>
        <fullName evidence="1">23S rRNA m5C1962 methyltransferase</fullName>
    </alternativeName>
    <alternativeName>
        <fullName evidence="1">rRNA (cytosine-C(5)-)-methyltransferase RlmI</fullName>
    </alternativeName>
</protein>
<reference key="1">
    <citation type="journal article" date="2011" name="J. Bacteriol.">
        <title>Comparative genomics of 28 Salmonella enterica isolates: evidence for CRISPR-mediated adaptive sublineage evolution.</title>
        <authorList>
            <person name="Fricke W.F."/>
            <person name="Mammel M.K."/>
            <person name="McDermott P.F."/>
            <person name="Tartera C."/>
            <person name="White D.G."/>
            <person name="Leclerc J.E."/>
            <person name="Ravel J."/>
            <person name="Cebula T.A."/>
        </authorList>
    </citation>
    <scope>NUCLEOTIDE SEQUENCE [LARGE SCALE GENOMIC DNA]</scope>
    <source>
        <strain>CVM19633</strain>
    </source>
</reference>
<organism>
    <name type="scientific">Salmonella schwarzengrund (strain CVM19633)</name>
    <dbReference type="NCBI Taxonomy" id="439843"/>
    <lineage>
        <taxon>Bacteria</taxon>
        <taxon>Pseudomonadati</taxon>
        <taxon>Pseudomonadota</taxon>
        <taxon>Gammaproteobacteria</taxon>
        <taxon>Enterobacterales</taxon>
        <taxon>Enterobacteriaceae</taxon>
        <taxon>Salmonella</taxon>
    </lineage>
</organism>
<evidence type="ECO:0000255" key="1">
    <source>
        <dbReference type="HAMAP-Rule" id="MF_01857"/>
    </source>
</evidence>
<dbReference type="EC" id="2.1.1.191" evidence="1"/>
<dbReference type="EMBL" id="CP001127">
    <property type="protein sequence ID" value="ACF90972.1"/>
    <property type="molecule type" value="Genomic_DNA"/>
</dbReference>
<dbReference type="RefSeq" id="WP_000140488.1">
    <property type="nucleotide sequence ID" value="NC_011094.1"/>
</dbReference>
<dbReference type="SMR" id="B4TSJ2"/>
<dbReference type="KEGG" id="sew:SeSA_A1143"/>
<dbReference type="HOGENOM" id="CLU_014042_0_0_6"/>
<dbReference type="Proteomes" id="UP000001865">
    <property type="component" value="Chromosome"/>
</dbReference>
<dbReference type="GO" id="GO:0005737">
    <property type="term" value="C:cytoplasm"/>
    <property type="evidence" value="ECO:0007669"/>
    <property type="project" value="UniProtKB-SubCell"/>
</dbReference>
<dbReference type="GO" id="GO:0003723">
    <property type="term" value="F:RNA binding"/>
    <property type="evidence" value="ECO:0007669"/>
    <property type="project" value="UniProtKB-KW"/>
</dbReference>
<dbReference type="GO" id="GO:0016434">
    <property type="term" value="F:rRNA (cytosine) methyltransferase activity"/>
    <property type="evidence" value="ECO:0007669"/>
    <property type="project" value="UniProtKB-UniRule"/>
</dbReference>
<dbReference type="CDD" id="cd02440">
    <property type="entry name" value="AdoMet_MTases"/>
    <property type="match status" value="1"/>
</dbReference>
<dbReference type="CDD" id="cd21153">
    <property type="entry name" value="PUA_RlmI"/>
    <property type="match status" value="1"/>
</dbReference>
<dbReference type="CDD" id="cd11572">
    <property type="entry name" value="RlmI_M_like"/>
    <property type="match status" value="1"/>
</dbReference>
<dbReference type="FunFam" id="3.40.50.150:FF:000044">
    <property type="entry name" value="Ribosomal RNA large subunit methyltransferase I"/>
    <property type="match status" value="1"/>
</dbReference>
<dbReference type="Gene3D" id="2.30.130.10">
    <property type="entry name" value="PUA domain"/>
    <property type="match status" value="1"/>
</dbReference>
<dbReference type="Gene3D" id="3.30.750.80">
    <property type="entry name" value="RNA methyltransferase domain (HRMD) like"/>
    <property type="match status" value="1"/>
</dbReference>
<dbReference type="Gene3D" id="3.40.50.150">
    <property type="entry name" value="Vaccinia Virus protein VP39"/>
    <property type="match status" value="1"/>
</dbReference>
<dbReference type="HAMAP" id="MF_01857">
    <property type="entry name" value="23SrRNA_methyltr_I"/>
    <property type="match status" value="1"/>
</dbReference>
<dbReference type="InterPro" id="IPR002478">
    <property type="entry name" value="PUA"/>
</dbReference>
<dbReference type="InterPro" id="IPR015947">
    <property type="entry name" value="PUA-like_sf"/>
</dbReference>
<dbReference type="InterPro" id="IPR036974">
    <property type="entry name" value="PUA_sf"/>
</dbReference>
<dbReference type="InterPro" id="IPR023542">
    <property type="entry name" value="RLMI"/>
</dbReference>
<dbReference type="InterPro" id="IPR041532">
    <property type="entry name" value="RlmI-like_PUA"/>
</dbReference>
<dbReference type="InterPro" id="IPR019614">
    <property type="entry name" value="SAM-dep_methyl-trfase"/>
</dbReference>
<dbReference type="InterPro" id="IPR029063">
    <property type="entry name" value="SAM-dependent_MTases_sf"/>
</dbReference>
<dbReference type="NCBIfam" id="NF011707">
    <property type="entry name" value="PRK15128.1"/>
    <property type="match status" value="1"/>
</dbReference>
<dbReference type="PANTHER" id="PTHR42873">
    <property type="entry name" value="RIBOSOMAL RNA LARGE SUBUNIT METHYLTRANSFERASE"/>
    <property type="match status" value="1"/>
</dbReference>
<dbReference type="PANTHER" id="PTHR42873:SF1">
    <property type="entry name" value="S-ADENOSYLMETHIONINE-DEPENDENT METHYLTRANSFERASE DOMAIN-CONTAINING PROTEIN"/>
    <property type="match status" value="1"/>
</dbReference>
<dbReference type="Pfam" id="PF10672">
    <property type="entry name" value="Methyltrans_SAM"/>
    <property type="match status" value="1"/>
</dbReference>
<dbReference type="Pfam" id="PF17785">
    <property type="entry name" value="PUA_3"/>
    <property type="match status" value="1"/>
</dbReference>
<dbReference type="SMART" id="SM00359">
    <property type="entry name" value="PUA"/>
    <property type="match status" value="1"/>
</dbReference>
<dbReference type="SUPFAM" id="SSF88697">
    <property type="entry name" value="PUA domain-like"/>
    <property type="match status" value="1"/>
</dbReference>
<dbReference type="SUPFAM" id="SSF53335">
    <property type="entry name" value="S-adenosyl-L-methionine-dependent methyltransferases"/>
    <property type="match status" value="1"/>
</dbReference>
<dbReference type="PROSITE" id="PS50890">
    <property type="entry name" value="PUA"/>
    <property type="match status" value="1"/>
</dbReference>